<gene>
    <name evidence="1" type="primary">rpsK</name>
    <name type="ordered locus">CbuG_1744</name>
</gene>
<sequence>MAKKRYRKVTEGIAHIKATFNNTMISVSDPQGNVLCFRSAGGSGFKGSRKGTPYGAQMASEEVGRLARDNFDMRRIAVRVKGPGAGRDSAIRGLRSAGLEVIHLEDRTPLPHNGCRPRKKRRV</sequence>
<keyword id="KW-0687">Ribonucleoprotein</keyword>
<keyword id="KW-0689">Ribosomal protein</keyword>
<keyword id="KW-0694">RNA-binding</keyword>
<keyword id="KW-0699">rRNA-binding</keyword>
<accession>B6J240</accession>
<organism>
    <name type="scientific">Coxiella burnetii (strain CbuG_Q212)</name>
    <name type="common">Coxiella burnetii (strain Q212)</name>
    <dbReference type="NCBI Taxonomy" id="434923"/>
    <lineage>
        <taxon>Bacteria</taxon>
        <taxon>Pseudomonadati</taxon>
        <taxon>Pseudomonadota</taxon>
        <taxon>Gammaproteobacteria</taxon>
        <taxon>Legionellales</taxon>
        <taxon>Coxiellaceae</taxon>
        <taxon>Coxiella</taxon>
    </lineage>
</organism>
<evidence type="ECO:0000255" key="1">
    <source>
        <dbReference type="HAMAP-Rule" id="MF_01310"/>
    </source>
</evidence>
<evidence type="ECO:0000305" key="2"/>
<feature type="chain" id="PRO_1000141077" description="Small ribosomal subunit protein uS11">
    <location>
        <begin position="1"/>
        <end position="123"/>
    </location>
</feature>
<comment type="function">
    <text evidence="1">Located on the platform of the 30S subunit, it bridges several disparate RNA helices of the 16S rRNA. Forms part of the Shine-Dalgarno cleft in the 70S ribosome.</text>
</comment>
<comment type="subunit">
    <text evidence="1">Part of the 30S ribosomal subunit. Interacts with proteins S7 and S18. Binds to IF-3.</text>
</comment>
<comment type="similarity">
    <text evidence="1">Belongs to the universal ribosomal protein uS11 family.</text>
</comment>
<protein>
    <recommendedName>
        <fullName evidence="1">Small ribosomal subunit protein uS11</fullName>
    </recommendedName>
    <alternativeName>
        <fullName evidence="2">30S ribosomal protein S11</fullName>
    </alternativeName>
</protein>
<name>RS11_COXB2</name>
<reference key="1">
    <citation type="journal article" date="2009" name="Infect. Immun.">
        <title>Comparative genomics reveal extensive transposon-mediated genomic plasticity and diversity among potential effector proteins within the genus Coxiella.</title>
        <authorList>
            <person name="Beare P.A."/>
            <person name="Unsworth N."/>
            <person name="Andoh M."/>
            <person name="Voth D.E."/>
            <person name="Omsland A."/>
            <person name="Gilk S.D."/>
            <person name="Williams K.P."/>
            <person name="Sobral B.W."/>
            <person name="Kupko J.J. III"/>
            <person name="Porcella S.F."/>
            <person name="Samuel J.E."/>
            <person name="Heinzen R.A."/>
        </authorList>
    </citation>
    <scope>NUCLEOTIDE SEQUENCE [LARGE SCALE GENOMIC DNA]</scope>
    <source>
        <strain>CbuG_Q212</strain>
    </source>
</reference>
<proteinExistence type="inferred from homology"/>
<dbReference type="EMBL" id="CP001019">
    <property type="protein sequence ID" value="ACJ19018.1"/>
    <property type="molecule type" value="Genomic_DNA"/>
</dbReference>
<dbReference type="RefSeq" id="WP_010957467.1">
    <property type="nucleotide sequence ID" value="NC_011527.1"/>
</dbReference>
<dbReference type="SMR" id="B6J240"/>
<dbReference type="KEGG" id="cbg:CbuG_1744"/>
<dbReference type="HOGENOM" id="CLU_072439_5_0_6"/>
<dbReference type="GO" id="GO:1990904">
    <property type="term" value="C:ribonucleoprotein complex"/>
    <property type="evidence" value="ECO:0007669"/>
    <property type="project" value="UniProtKB-KW"/>
</dbReference>
<dbReference type="GO" id="GO:0005840">
    <property type="term" value="C:ribosome"/>
    <property type="evidence" value="ECO:0007669"/>
    <property type="project" value="UniProtKB-KW"/>
</dbReference>
<dbReference type="GO" id="GO:0019843">
    <property type="term" value="F:rRNA binding"/>
    <property type="evidence" value="ECO:0007669"/>
    <property type="project" value="UniProtKB-UniRule"/>
</dbReference>
<dbReference type="GO" id="GO:0003735">
    <property type="term" value="F:structural constituent of ribosome"/>
    <property type="evidence" value="ECO:0007669"/>
    <property type="project" value="InterPro"/>
</dbReference>
<dbReference type="GO" id="GO:0006412">
    <property type="term" value="P:translation"/>
    <property type="evidence" value="ECO:0007669"/>
    <property type="project" value="UniProtKB-UniRule"/>
</dbReference>
<dbReference type="FunFam" id="3.30.420.80:FF:000004">
    <property type="entry name" value="30S ribosomal protein S11"/>
    <property type="match status" value="1"/>
</dbReference>
<dbReference type="Gene3D" id="3.30.420.80">
    <property type="entry name" value="Ribosomal protein S11"/>
    <property type="match status" value="1"/>
</dbReference>
<dbReference type="HAMAP" id="MF_01310">
    <property type="entry name" value="Ribosomal_uS11"/>
    <property type="match status" value="1"/>
</dbReference>
<dbReference type="InterPro" id="IPR001971">
    <property type="entry name" value="Ribosomal_uS11"/>
</dbReference>
<dbReference type="InterPro" id="IPR019981">
    <property type="entry name" value="Ribosomal_uS11_bac-type"/>
</dbReference>
<dbReference type="InterPro" id="IPR018102">
    <property type="entry name" value="Ribosomal_uS11_CS"/>
</dbReference>
<dbReference type="InterPro" id="IPR036967">
    <property type="entry name" value="Ribosomal_uS11_sf"/>
</dbReference>
<dbReference type="NCBIfam" id="NF003698">
    <property type="entry name" value="PRK05309.1"/>
    <property type="match status" value="1"/>
</dbReference>
<dbReference type="NCBIfam" id="TIGR03632">
    <property type="entry name" value="uS11_bact"/>
    <property type="match status" value="1"/>
</dbReference>
<dbReference type="PANTHER" id="PTHR11759">
    <property type="entry name" value="40S RIBOSOMAL PROTEIN S14/30S RIBOSOMAL PROTEIN S11"/>
    <property type="match status" value="1"/>
</dbReference>
<dbReference type="Pfam" id="PF00411">
    <property type="entry name" value="Ribosomal_S11"/>
    <property type="match status" value="1"/>
</dbReference>
<dbReference type="PIRSF" id="PIRSF002131">
    <property type="entry name" value="Ribosomal_S11"/>
    <property type="match status" value="1"/>
</dbReference>
<dbReference type="SUPFAM" id="SSF53137">
    <property type="entry name" value="Translational machinery components"/>
    <property type="match status" value="1"/>
</dbReference>
<dbReference type="PROSITE" id="PS00054">
    <property type="entry name" value="RIBOSOMAL_S11"/>
    <property type="match status" value="1"/>
</dbReference>